<feature type="signal peptide" evidence="1">
    <location>
        <begin position="1"/>
        <end position="18"/>
    </location>
</feature>
<feature type="chain" id="PRO_0000032740" description="Fibromodulin">
    <location>
        <begin position="19"/>
        <end position="376"/>
    </location>
</feature>
<feature type="domain" description="LRRNT">
    <location>
        <begin position="67"/>
        <end position="105"/>
    </location>
</feature>
<feature type="repeat" description="LRR 1">
    <location>
        <begin position="106"/>
        <end position="127"/>
    </location>
</feature>
<feature type="repeat" description="LRR 2">
    <location>
        <begin position="130"/>
        <end position="151"/>
    </location>
</feature>
<feature type="repeat" description="LRR 3">
    <location>
        <begin position="156"/>
        <end position="176"/>
    </location>
</feature>
<feature type="repeat" description="LRR 4">
    <location>
        <begin position="177"/>
        <end position="198"/>
    </location>
</feature>
<feature type="repeat" description="LRR 5">
    <location>
        <begin position="201"/>
        <end position="222"/>
    </location>
</feature>
<feature type="repeat" description="LRR 6">
    <location>
        <begin position="224"/>
        <end position="245"/>
    </location>
</feature>
<feature type="repeat" description="LRR 7">
    <location>
        <begin position="246"/>
        <end position="266"/>
    </location>
</feature>
<feature type="repeat" description="LRR 8">
    <location>
        <begin position="269"/>
        <end position="289"/>
    </location>
</feature>
<feature type="repeat" description="LRR 9">
    <location>
        <begin position="294"/>
        <end position="315"/>
    </location>
</feature>
<feature type="repeat" description="LRR 10">
    <location>
        <begin position="316"/>
        <end position="335"/>
    </location>
</feature>
<feature type="repeat" description="LRR 11">
    <location>
        <begin position="344"/>
        <end position="367"/>
    </location>
</feature>
<feature type="modified residue" description="Pyrrolidone carboxylic acid" evidence="2">
    <location>
        <position position="19"/>
    </location>
</feature>
<feature type="modified residue" description="Sulfotyrosine" evidence="1">
    <location>
        <position position="20"/>
    </location>
</feature>
<feature type="modified residue" description="Sulfotyrosine" evidence="1">
    <location>
        <position position="38"/>
    </location>
</feature>
<feature type="modified residue" description="Sulfotyrosine" evidence="1">
    <location>
        <position position="53"/>
    </location>
</feature>
<feature type="modified residue" description="Sulfotyrosine" evidence="1">
    <location>
        <position position="55"/>
    </location>
</feature>
<feature type="modified residue" description="Sulfotyrosine" evidence="1">
    <location>
        <position position="63"/>
    </location>
</feature>
<feature type="modified residue" description="Sulfotyrosine" evidence="1">
    <location>
        <position position="65"/>
    </location>
</feature>
<feature type="glycosylation site" description="N-linked (GlcNAc...) (keratan sulfate) asparagine" evidence="1">
    <location>
        <position position="127"/>
    </location>
</feature>
<feature type="glycosylation site" description="N-linked (GlcNAc...) (keratan sulfate) asparagine" evidence="1">
    <location>
        <position position="166"/>
    </location>
</feature>
<feature type="glycosylation site" description="N-linked (GlcNAc...) (keratan sulfate) asparagine" evidence="1">
    <location>
        <position position="201"/>
    </location>
</feature>
<feature type="glycosylation site" description="N-linked (GlcNAc...) (keratan sulfate) asparagine" evidence="1">
    <location>
        <position position="291"/>
    </location>
</feature>
<feature type="glycosylation site" description="N-linked (GlcNAc...) asparagine" evidence="3">
    <location>
        <position position="341"/>
    </location>
</feature>
<feature type="disulfide bond" evidence="1">
    <location>
        <begin position="334"/>
        <end position="367"/>
    </location>
</feature>
<sequence>MQWASVLLLAGLCSLSQGQYDEDSHWWIQYLRNQQSTYYDPYDPYPYEPSEPYPYGVEEGPAYAYGAPPPPEPRDCPQECDCPPNFPTAMYCDNRNLKYLPFVPSRMKYVYFQNNQISAIQEGVFDNATGLLWVALHGNQITSDKVGRKVFSKLRHLERLYLDHNNLTRMPGPLPRSLRELHLDHNQISRVPNNALEGLENLTALYLHHNEIQEVGSSMRGLRSLILLDLSYNHLRRVPDGLPSALEQLYLEHNNVYTVPDSYFRGSPKLLYVRLSHNSLTNNGLATNTFNSSSLLELDLSYNQLQKIPPVNTNLENLYLQGNRINEFSISSFCTVVDVMNFSKLQVLRLDGNEIKRSAMPVDAPLCLRLANLIEI</sequence>
<accession>P50608</accession>
<comment type="function">
    <text>Affects the rate of fibrils formation. May have a primary role in collagen fibrillogenesis.</text>
</comment>
<comment type="subunit">
    <text>Binds to type I and type II collagen.</text>
</comment>
<comment type="subcellular location">
    <subcellularLocation>
        <location>Secreted</location>
        <location>Extracellular space</location>
        <location>Extracellular matrix</location>
    </subcellularLocation>
</comment>
<comment type="tissue specificity">
    <text>Highest levels observed in knee epiphysis, in calvarial and diaphyseal bone, in nasal and costal cartilage, in the eye, and in bladder. In mature knee joint it is mostly present in the proliferating zone of growth plate. It is also observed in ligaments, especially at insertion sites, in the junction between meniscus and joint capsule, in the perimysium of skeletal muscle and in the periosteum.</text>
</comment>
<comment type="developmental stage">
    <text>Highest levels between 5 days and 1 month of age. Thereafter, the expression of declined to a level of approx. 35% of maximum, and remained constant throughout the rest of the observation period.</text>
</comment>
<comment type="PTM">
    <text evidence="1">Binds keratan sulfate chains.</text>
</comment>
<comment type="PTM">
    <text evidence="4">Sulfated on tyrosine residue(s).</text>
</comment>
<comment type="similarity">
    <text evidence="4">Belongs to the small leucine-rich proteoglycan (SLRP) family. SLRP class II subfamily.</text>
</comment>
<evidence type="ECO:0000250" key="1"/>
<evidence type="ECO:0000250" key="2">
    <source>
        <dbReference type="UniProtKB" id="P13605"/>
    </source>
</evidence>
<evidence type="ECO:0000255" key="3"/>
<evidence type="ECO:0000305" key="4"/>
<name>FMOD_MOUSE</name>
<organism>
    <name type="scientific">Mus musculus</name>
    <name type="common">Mouse</name>
    <dbReference type="NCBI Taxonomy" id="10090"/>
    <lineage>
        <taxon>Eukaryota</taxon>
        <taxon>Metazoa</taxon>
        <taxon>Chordata</taxon>
        <taxon>Craniata</taxon>
        <taxon>Vertebrata</taxon>
        <taxon>Euteleostomi</taxon>
        <taxon>Mammalia</taxon>
        <taxon>Eutheria</taxon>
        <taxon>Euarchontoglires</taxon>
        <taxon>Glires</taxon>
        <taxon>Rodentia</taxon>
        <taxon>Myomorpha</taxon>
        <taxon>Muroidea</taxon>
        <taxon>Muridae</taxon>
        <taxon>Murinae</taxon>
        <taxon>Mus</taxon>
        <taxon>Mus</taxon>
    </lineage>
</organism>
<keyword id="KW-1015">Disulfide bond</keyword>
<keyword id="KW-0272">Extracellular matrix</keyword>
<keyword id="KW-0325">Glycoprotein</keyword>
<keyword id="KW-0433">Leucine-rich repeat</keyword>
<keyword id="KW-0654">Proteoglycan</keyword>
<keyword id="KW-0873">Pyrrolidone carboxylic acid</keyword>
<keyword id="KW-1185">Reference proteome</keyword>
<keyword id="KW-0677">Repeat</keyword>
<keyword id="KW-0964">Secreted</keyword>
<keyword id="KW-0732">Signal</keyword>
<keyword id="KW-0765">Sulfation</keyword>
<dbReference type="EMBL" id="X94998">
    <property type="protein sequence ID" value="CAA64454.1"/>
    <property type="molecule type" value="mRNA"/>
</dbReference>
<dbReference type="EMBL" id="BC064779">
    <property type="protein sequence ID" value="AAH64779.1"/>
    <property type="molecule type" value="mRNA"/>
</dbReference>
<dbReference type="CCDS" id="CCDS15301.1"/>
<dbReference type="RefSeq" id="NP_067330.1">
    <property type="nucleotide sequence ID" value="NM_021355.4"/>
</dbReference>
<dbReference type="SMR" id="P50608"/>
<dbReference type="BioGRID" id="199715">
    <property type="interactions" value="1"/>
</dbReference>
<dbReference type="FunCoup" id="P50608">
    <property type="interactions" value="201"/>
</dbReference>
<dbReference type="STRING" id="10090.ENSMUSP00000035489"/>
<dbReference type="GlyCosmos" id="P50608">
    <property type="glycosylation" value="5 sites, No reported glycans"/>
</dbReference>
<dbReference type="GlyGen" id="P50608">
    <property type="glycosylation" value="5 sites, 3 N-linked glycans (3 sites)"/>
</dbReference>
<dbReference type="iPTMnet" id="P50608"/>
<dbReference type="PhosphoSitePlus" id="P50608"/>
<dbReference type="SwissPalm" id="P50608"/>
<dbReference type="jPOST" id="P50608"/>
<dbReference type="PaxDb" id="10090-ENSMUSP00000035489"/>
<dbReference type="PeptideAtlas" id="P50608"/>
<dbReference type="ProteomicsDB" id="267606"/>
<dbReference type="Antibodypedia" id="34544">
    <property type="antibodies" value="287 antibodies from 29 providers"/>
</dbReference>
<dbReference type="DNASU" id="14264"/>
<dbReference type="Ensembl" id="ENSMUST00000048183.8">
    <property type="protein sequence ID" value="ENSMUSP00000035489.8"/>
    <property type="gene ID" value="ENSMUSG00000041559.8"/>
</dbReference>
<dbReference type="GeneID" id="14264"/>
<dbReference type="KEGG" id="mmu:14264"/>
<dbReference type="UCSC" id="uc007crd.1">
    <property type="organism name" value="mouse"/>
</dbReference>
<dbReference type="AGR" id="MGI:1328364"/>
<dbReference type="CTD" id="2331"/>
<dbReference type="MGI" id="MGI:1328364">
    <property type="gene designation" value="Fmod"/>
</dbReference>
<dbReference type="VEuPathDB" id="HostDB:ENSMUSG00000041559"/>
<dbReference type="eggNOG" id="KOG0619">
    <property type="taxonomic scope" value="Eukaryota"/>
</dbReference>
<dbReference type="GeneTree" id="ENSGT00940000157007"/>
<dbReference type="HOGENOM" id="CLU_000288_186_4_1"/>
<dbReference type="InParanoid" id="P50608"/>
<dbReference type="OMA" id="WWFQYLR"/>
<dbReference type="OrthoDB" id="1668230at2759"/>
<dbReference type="PhylomeDB" id="P50608"/>
<dbReference type="TreeFam" id="TF334562"/>
<dbReference type="Reactome" id="R-MMU-2022854">
    <property type="pathway name" value="Keratan sulfate biosynthesis"/>
</dbReference>
<dbReference type="Reactome" id="R-MMU-2022857">
    <property type="pathway name" value="Keratan sulfate degradation"/>
</dbReference>
<dbReference type="BioGRID-ORCS" id="14264">
    <property type="hits" value="4 hits in 76 CRISPR screens"/>
</dbReference>
<dbReference type="PRO" id="PR:P50608"/>
<dbReference type="Proteomes" id="UP000000589">
    <property type="component" value="Chromosome 1"/>
</dbReference>
<dbReference type="RNAct" id="P50608">
    <property type="molecule type" value="protein"/>
</dbReference>
<dbReference type="Bgee" id="ENSMUSG00000041559">
    <property type="expression patterns" value="Expressed in vault of skull and 262 other cell types or tissues"/>
</dbReference>
<dbReference type="ExpressionAtlas" id="P50608">
    <property type="expression patterns" value="baseline and differential"/>
</dbReference>
<dbReference type="GO" id="GO:0005576">
    <property type="term" value="C:extracellular region"/>
    <property type="evidence" value="ECO:0007669"/>
    <property type="project" value="UniProtKB-KW"/>
</dbReference>
<dbReference type="FunFam" id="3.80.10.10:FF:000460">
    <property type="entry name" value="Fibromodulin"/>
    <property type="match status" value="1"/>
</dbReference>
<dbReference type="FunFam" id="3.80.10.10:FF:000390">
    <property type="entry name" value="fibromodulin"/>
    <property type="match status" value="1"/>
</dbReference>
<dbReference type="Gene3D" id="3.80.10.10">
    <property type="entry name" value="Ribonuclease Inhibitor"/>
    <property type="match status" value="2"/>
</dbReference>
<dbReference type="InterPro" id="IPR001611">
    <property type="entry name" value="Leu-rich_rpt"/>
</dbReference>
<dbReference type="InterPro" id="IPR003591">
    <property type="entry name" value="Leu-rich_rpt_typical-subtyp"/>
</dbReference>
<dbReference type="InterPro" id="IPR032675">
    <property type="entry name" value="LRR_dom_sf"/>
</dbReference>
<dbReference type="InterPro" id="IPR000372">
    <property type="entry name" value="LRRNT"/>
</dbReference>
<dbReference type="InterPro" id="IPR050333">
    <property type="entry name" value="SLRP"/>
</dbReference>
<dbReference type="PANTHER" id="PTHR45712">
    <property type="entry name" value="AGAP008170-PA"/>
    <property type="match status" value="1"/>
</dbReference>
<dbReference type="PANTHER" id="PTHR45712:SF4">
    <property type="entry name" value="FIBROMODULIN"/>
    <property type="match status" value="1"/>
</dbReference>
<dbReference type="Pfam" id="PF00560">
    <property type="entry name" value="LRR_1"/>
    <property type="match status" value="1"/>
</dbReference>
<dbReference type="Pfam" id="PF13855">
    <property type="entry name" value="LRR_8"/>
    <property type="match status" value="3"/>
</dbReference>
<dbReference type="Pfam" id="PF01462">
    <property type="entry name" value="LRRNT"/>
    <property type="match status" value="1"/>
</dbReference>
<dbReference type="SMART" id="SM00364">
    <property type="entry name" value="LRR_BAC"/>
    <property type="match status" value="5"/>
</dbReference>
<dbReference type="SMART" id="SM00369">
    <property type="entry name" value="LRR_TYP"/>
    <property type="match status" value="8"/>
</dbReference>
<dbReference type="SMART" id="SM00013">
    <property type="entry name" value="LRRNT"/>
    <property type="match status" value="1"/>
</dbReference>
<dbReference type="SUPFAM" id="SSF52058">
    <property type="entry name" value="L domain-like"/>
    <property type="match status" value="1"/>
</dbReference>
<dbReference type="PROSITE" id="PS51450">
    <property type="entry name" value="LRR"/>
    <property type="match status" value="9"/>
</dbReference>
<protein>
    <recommendedName>
        <fullName>Fibromodulin</fullName>
        <shortName>FM</shortName>
    </recommendedName>
    <alternativeName>
        <fullName>Collagen-binding 59 kDa protein</fullName>
    </alternativeName>
    <alternativeName>
        <fullName>Keratan sulfate proteoglycan fibromodulin</fullName>
        <shortName>KSPG fibromodulin</shortName>
    </alternativeName>
</protein>
<proteinExistence type="evidence at transcript level"/>
<gene>
    <name type="primary">Fmod</name>
</gene>
<reference key="1">
    <citation type="journal article" date="2001" name="Biochem. J.">
        <title>Murine fibromodulin: cDNA and genomic structure, and age-related expression and distribution in the knee joint.</title>
        <authorList>
            <person name="Saeaemaenen A.-M.K."/>
            <person name="Salminen H.J."/>
            <person name="Rantakokko A.J."/>
            <person name="Heinegaard D."/>
            <person name="Vuorio E.I."/>
        </authorList>
    </citation>
    <scope>NUCLEOTIDE SEQUENCE [MRNA]</scope>
    <source>
        <strain>C57BL/6J</strain>
        <tissue>Cartilage</tissue>
    </source>
</reference>
<reference key="2">
    <citation type="journal article" date="2004" name="Genome Res.">
        <title>The status, quality, and expansion of the NIH full-length cDNA project: the Mammalian Gene Collection (MGC).</title>
        <authorList>
            <consortium name="The MGC Project Team"/>
        </authorList>
    </citation>
    <scope>NUCLEOTIDE SEQUENCE [LARGE SCALE MRNA]</scope>
    <source>
        <strain>C3H/He</strain>
        <tissue>Osteoblast</tissue>
    </source>
</reference>